<evidence type="ECO:0000250" key="1">
    <source>
        <dbReference type="UniProtKB" id="Q14331"/>
    </source>
</evidence>
<evidence type="ECO:0000255" key="2"/>
<evidence type="ECO:0000256" key="3">
    <source>
        <dbReference type="SAM" id="MobiDB-lite"/>
    </source>
</evidence>
<evidence type="ECO:0000269" key="4">
    <source>
    </source>
</evidence>
<evidence type="ECO:0000305" key="5"/>
<evidence type="ECO:0000312" key="6">
    <source>
        <dbReference type="EMBL" id="AAH74376.1"/>
    </source>
</evidence>
<feature type="chain" id="PRO_0000430489" description="Protein FRG1">
    <location>
        <begin position="1"/>
        <end position="210"/>
    </location>
</feature>
<feature type="region of interest" description="Disordered" evidence="3">
    <location>
        <begin position="1"/>
        <end position="37"/>
    </location>
</feature>
<feature type="short sequence motif" description="Nuclear localization signal" evidence="1 2">
    <location>
        <begin position="22"/>
        <end position="30"/>
    </location>
</feature>
<feature type="compositionally biased region" description="Basic residues" evidence="3">
    <location>
        <begin position="17"/>
        <end position="30"/>
    </location>
</feature>
<comment type="function">
    <text evidence="1">Binds to mRNA in a sequence-independent manner. May play a role in regulation of pre-mRNA splicing or in the assembly of rRNA into ribosomal subunits. May be involved in mRNA transport. May be involved in epigenetic regulation of muscle differentiation through regulation of activity of the histone-lysine N-methyltransferase KMT5B (By similarity).</text>
</comment>
<comment type="subunit">
    <text evidence="1">Homodimer and homotetramer in solution.</text>
</comment>
<comment type="subcellular location">
    <subcellularLocation>
        <location evidence="4">Nucleus</location>
        <location evidence="4">Cajal body</location>
    </subcellularLocation>
    <subcellularLocation>
        <location evidence="4">Nucleus</location>
        <location evidence="4">Nucleolus</location>
    </subcellularLocation>
    <subcellularLocation>
        <location evidence="1">Cytoplasm</location>
    </subcellularLocation>
    <subcellularLocation>
        <location evidence="1">Cytoplasm</location>
        <location evidence="1">Myofibril</location>
        <location evidence="1">Sarcomere</location>
        <location evidence="1">Z line</location>
    </subcellularLocation>
</comment>
<comment type="similarity">
    <text evidence="1">Belongs to the FRG1 family.</text>
</comment>
<sequence length="210" mass="23131">MAEYSKVKSTKLMLKGIKNKSKKNKDKKRKREESDEDKLDIAGNWWSVKNFGEISGTVAIEMDKGAYIHALDNGLFTIGAPHKDDDDGPSPPEQFTAIKLSDSRVALKSGYGKYLGINSDGLVIGRSDAIGAREQWEPVFDTGKMALLASNSCFVGCNEEGDLVAQSKTAGEGEMIKIRSCAEREAKRDDDIPNEDKGNVKQCEINYVYV</sequence>
<gene>
    <name type="primary">frg1</name>
</gene>
<organism>
    <name type="scientific">Xenopus laevis</name>
    <name type="common">African clawed frog</name>
    <dbReference type="NCBI Taxonomy" id="8355"/>
    <lineage>
        <taxon>Eukaryota</taxon>
        <taxon>Metazoa</taxon>
        <taxon>Chordata</taxon>
        <taxon>Craniata</taxon>
        <taxon>Vertebrata</taxon>
        <taxon>Euteleostomi</taxon>
        <taxon>Amphibia</taxon>
        <taxon>Batrachia</taxon>
        <taxon>Anura</taxon>
        <taxon>Pipoidea</taxon>
        <taxon>Pipidae</taxon>
        <taxon>Xenopodinae</taxon>
        <taxon>Xenopus</taxon>
        <taxon>Xenopus</taxon>
    </lineage>
</organism>
<accession>Q6GLS8</accession>
<keyword id="KW-0009">Actin-binding</keyword>
<keyword id="KW-0963">Cytoplasm</keyword>
<keyword id="KW-0507">mRNA processing</keyword>
<keyword id="KW-0508">mRNA splicing</keyword>
<keyword id="KW-0517">Myogenesis</keyword>
<keyword id="KW-0539">Nucleus</keyword>
<keyword id="KW-1185">Reference proteome</keyword>
<keyword id="KW-0690">Ribosome biogenesis</keyword>
<keyword id="KW-0694">RNA-binding</keyword>
<keyword id="KW-0698">rRNA processing</keyword>
<dbReference type="EMBL" id="BC074376">
    <property type="protein sequence ID" value="AAH74376.1"/>
    <property type="molecule type" value="mRNA"/>
</dbReference>
<dbReference type="RefSeq" id="NP_001086250.1">
    <property type="nucleotide sequence ID" value="NM_001092781.1"/>
</dbReference>
<dbReference type="SMR" id="Q6GLS8"/>
<dbReference type="DNASU" id="444679"/>
<dbReference type="AGR" id="Xenbase:XB-GENE-1008656"/>
<dbReference type="Xenbase" id="XB-GENE-1008656">
    <property type="gene designation" value="frg1.L"/>
</dbReference>
<dbReference type="Proteomes" id="UP000186698">
    <property type="component" value="Unplaced"/>
</dbReference>
<dbReference type="Bgee" id="444679">
    <property type="expression patterns" value="Expressed in egg cell and 19 other cell types or tissues"/>
</dbReference>
<dbReference type="GO" id="GO:0015030">
    <property type="term" value="C:Cajal body"/>
    <property type="evidence" value="ECO:0007669"/>
    <property type="project" value="UniProtKB-SubCell"/>
</dbReference>
<dbReference type="GO" id="GO:0071013">
    <property type="term" value="C:catalytic step 2 spliceosome"/>
    <property type="evidence" value="ECO:0000318"/>
    <property type="project" value="GO_Central"/>
</dbReference>
<dbReference type="GO" id="GO:0005730">
    <property type="term" value="C:nucleolus"/>
    <property type="evidence" value="ECO:0000318"/>
    <property type="project" value="GO_Central"/>
</dbReference>
<dbReference type="GO" id="GO:0055120">
    <property type="term" value="C:striated muscle dense body"/>
    <property type="evidence" value="ECO:0000318"/>
    <property type="project" value="GO_Central"/>
</dbReference>
<dbReference type="GO" id="GO:0030018">
    <property type="term" value="C:Z disc"/>
    <property type="evidence" value="ECO:0007669"/>
    <property type="project" value="UniProtKB-SubCell"/>
</dbReference>
<dbReference type="GO" id="GO:0051015">
    <property type="term" value="F:actin filament binding"/>
    <property type="evidence" value="ECO:0000318"/>
    <property type="project" value="GO_Central"/>
</dbReference>
<dbReference type="GO" id="GO:0003723">
    <property type="term" value="F:RNA binding"/>
    <property type="evidence" value="ECO:0007669"/>
    <property type="project" value="UniProtKB-KW"/>
</dbReference>
<dbReference type="GO" id="GO:0006397">
    <property type="term" value="P:mRNA processing"/>
    <property type="evidence" value="ECO:0007669"/>
    <property type="project" value="UniProtKB-KW"/>
</dbReference>
<dbReference type="GO" id="GO:0007517">
    <property type="term" value="P:muscle organ development"/>
    <property type="evidence" value="ECO:0007669"/>
    <property type="project" value="UniProtKB-KW"/>
</dbReference>
<dbReference type="GO" id="GO:0008380">
    <property type="term" value="P:RNA splicing"/>
    <property type="evidence" value="ECO:0007669"/>
    <property type="project" value="UniProtKB-KW"/>
</dbReference>
<dbReference type="GO" id="GO:0006364">
    <property type="term" value="P:rRNA processing"/>
    <property type="evidence" value="ECO:0007669"/>
    <property type="project" value="UniProtKB-KW"/>
</dbReference>
<dbReference type="CDD" id="cd23338">
    <property type="entry name" value="beta-trefoil_FSCN_FRG1"/>
    <property type="match status" value="1"/>
</dbReference>
<dbReference type="FunFam" id="2.80.10.50:FF:000031">
    <property type="entry name" value="FRG1 isoform 1"/>
    <property type="match status" value="1"/>
</dbReference>
<dbReference type="Gene3D" id="2.80.10.50">
    <property type="match status" value="1"/>
</dbReference>
<dbReference type="InterPro" id="IPR008999">
    <property type="entry name" value="Actin-crosslinking"/>
</dbReference>
<dbReference type="InterPro" id="IPR010414">
    <property type="entry name" value="FRG1"/>
</dbReference>
<dbReference type="PANTHER" id="PTHR12928">
    <property type="entry name" value="FRG1 PROTEIN"/>
    <property type="match status" value="1"/>
</dbReference>
<dbReference type="PANTHER" id="PTHR12928:SF0">
    <property type="entry name" value="FSHD REGION GENE 1"/>
    <property type="match status" value="1"/>
</dbReference>
<dbReference type="Pfam" id="PF06229">
    <property type="entry name" value="FRG1"/>
    <property type="match status" value="1"/>
</dbReference>
<dbReference type="SUPFAM" id="SSF50405">
    <property type="entry name" value="Actin-crosslinking proteins"/>
    <property type="match status" value="1"/>
</dbReference>
<protein>
    <recommendedName>
        <fullName evidence="1">Protein FRG1</fullName>
    </recommendedName>
</protein>
<reference evidence="6" key="1">
    <citation type="submission" date="2004-06" db="EMBL/GenBank/DDBJ databases">
        <authorList>
            <consortium name="NIH - Xenopus Gene Collection (XGC) project"/>
        </authorList>
    </citation>
    <scope>NUCLEOTIDE SEQUENCE [LARGE SCALE MRNA]</scope>
    <source>
        <tissue evidence="6">Brain</tissue>
    </source>
</reference>
<reference evidence="5" key="2">
    <citation type="journal article" date="2011" name="J. Mol. Biol.">
        <title>Facioscapulohumeral muscular dystrophy region gene 1 is a dynamic RNA-associated and actin-bundling protein.</title>
        <authorList>
            <person name="Sun C.Y."/>
            <person name="van Koningsbruggen S."/>
            <person name="Long S.W."/>
            <person name="Straasheijm K."/>
            <person name="Klooster R."/>
            <person name="Jones T.I."/>
            <person name="Bellini M."/>
            <person name="Levesque L."/>
            <person name="Brieher W.M."/>
            <person name="van der Maarel S.M."/>
            <person name="Jones P.L."/>
        </authorList>
    </citation>
    <scope>SUBCELLULAR LOCATION</scope>
    <source>
        <tissue evidence="4">Oocyte</tissue>
    </source>
</reference>
<proteinExistence type="evidence at transcript level"/>
<name>FRG1_XENLA</name>